<protein>
    <recommendedName>
        <fullName>GTP 3',8-cyclase, mitochondrial</fullName>
        <ecNumber evidence="2">4.1.99.22</ecNumber>
    </recommendedName>
    <alternativeName>
        <fullName>Molybdenum cofactor biosynthesis enzyme CNX2</fullName>
    </alternativeName>
    <alternativeName>
        <fullName>Molybdopterin biosynthesis protein CNX2</fullName>
    </alternativeName>
    <alternativeName>
        <fullName>Molybdopterin precursor Z synthase</fullName>
    </alternativeName>
</protein>
<comment type="function">
    <text evidence="2">Catalyzes the cyclization of GTP to (8S)-3',8-cyclo-7,8-dihydroguanosine 5'-triphosphate.</text>
</comment>
<comment type="catalytic activity">
    <reaction evidence="2">
        <text>GTP + AH2 + S-adenosyl-L-methionine = (8S)-3',8-cyclo-7,8-dihydroguanosine 5'-triphosphate + 5'-deoxyadenosine + L-methionine + A + H(+)</text>
        <dbReference type="Rhea" id="RHEA:49576"/>
        <dbReference type="ChEBI" id="CHEBI:13193"/>
        <dbReference type="ChEBI" id="CHEBI:15378"/>
        <dbReference type="ChEBI" id="CHEBI:17319"/>
        <dbReference type="ChEBI" id="CHEBI:17499"/>
        <dbReference type="ChEBI" id="CHEBI:37565"/>
        <dbReference type="ChEBI" id="CHEBI:57844"/>
        <dbReference type="ChEBI" id="CHEBI:59789"/>
        <dbReference type="ChEBI" id="CHEBI:131766"/>
        <dbReference type="EC" id="4.1.99.22"/>
    </reaction>
</comment>
<comment type="cofactor">
    <cofactor evidence="2">
        <name>[4Fe-4S] cluster</name>
        <dbReference type="ChEBI" id="CHEBI:49883"/>
    </cofactor>
    <text evidence="2">Binds 2 [4Fe-4S] clusters. Binds 1 [4Fe-4S] cluster coordinated with 3 cysteines and an exchangeable S-adenosyl-L-methionine and 1 [4Fe-4S] cluster coordinated with 3 cysteines and the GTP-derived substrate.</text>
</comment>
<comment type="pathway">
    <text>Cofactor biosynthesis; molybdopterin biosynthesis.</text>
</comment>
<comment type="subunit">
    <text evidence="4">Homodimer.</text>
</comment>
<comment type="interaction">
    <interactant intactId="EBI-4446408">
        <id>Q39055</id>
    </interactant>
    <interactant intactId="EBI-963665">
        <id>Q8GXW1</id>
        <label>RGL2</label>
    </interactant>
    <organismsDiffer>false</organismsDiffer>
    <experiments>3</experiments>
</comment>
<comment type="subcellular location">
    <subcellularLocation>
        <location evidence="4 7">Mitochondrion matrix</location>
    </subcellularLocation>
</comment>
<comment type="alternative products">
    <event type="alternative splicing"/>
    <isoform>
        <id>Q39055-1</id>
        <name>1</name>
        <sequence type="displayed"/>
    </isoform>
    <isoform>
        <id>Q39055-2</id>
        <name>2</name>
        <sequence type="described" ref="VSP_044629"/>
    </isoform>
</comment>
<comment type="tissue specificity">
    <text>Expressed in all organs, with an abundant expression in the roots.</text>
</comment>
<comment type="similarity">
    <text evidence="6">Belongs to the radical SAM superfamily. MoaA family.</text>
</comment>
<proteinExistence type="evidence at protein level"/>
<reference key="1">
    <citation type="journal article" date="1995" name="J. Biol. Chem.">
        <title>Isolation of two Arabidopsis cDNAs involved in early steps of molybdenum cofactor biosynthesis by functional complementation of Escherichia coli mutants.</title>
        <authorList>
            <person name="Hoff T."/>
            <person name="Schnorr K.M."/>
            <person name="Meyer C."/>
            <person name="Caboche M."/>
        </authorList>
    </citation>
    <scope>NUCLEOTIDE SEQUENCE [MRNA]</scope>
    <source>
        <strain>cv. Columbia</strain>
    </source>
</reference>
<reference key="2">
    <citation type="journal article" date="1999" name="Nature">
        <title>Sequence and analysis of chromosome 2 of the plant Arabidopsis thaliana.</title>
        <authorList>
            <person name="Lin X."/>
            <person name="Kaul S."/>
            <person name="Rounsley S.D."/>
            <person name="Shea T.P."/>
            <person name="Benito M.-I."/>
            <person name="Town C.D."/>
            <person name="Fujii C.Y."/>
            <person name="Mason T.M."/>
            <person name="Bowman C.L."/>
            <person name="Barnstead M.E."/>
            <person name="Feldblyum T.V."/>
            <person name="Buell C.R."/>
            <person name="Ketchum K.A."/>
            <person name="Lee J.J."/>
            <person name="Ronning C.M."/>
            <person name="Koo H.L."/>
            <person name="Moffat K.S."/>
            <person name="Cronin L.A."/>
            <person name="Shen M."/>
            <person name="Pai G."/>
            <person name="Van Aken S."/>
            <person name="Umayam L."/>
            <person name="Tallon L.J."/>
            <person name="Gill J.E."/>
            <person name="Adams M.D."/>
            <person name="Carrera A.J."/>
            <person name="Creasy T.H."/>
            <person name="Goodman H.M."/>
            <person name="Somerville C.R."/>
            <person name="Copenhaver G.P."/>
            <person name="Preuss D."/>
            <person name="Nierman W.C."/>
            <person name="White O."/>
            <person name="Eisen J.A."/>
            <person name="Salzberg S.L."/>
            <person name="Fraser C.M."/>
            <person name="Venter J.C."/>
        </authorList>
    </citation>
    <scope>NUCLEOTIDE SEQUENCE [LARGE SCALE GENOMIC DNA]</scope>
    <source>
        <strain>cv. Columbia</strain>
    </source>
</reference>
<reference key="3">
    <citation type="journal article" date="2017" name="Plant J.">
        <title>Araport11: a complete reannotation of the Arabidopsis thaliana reference genome.</title>
        <authorList>
            <person name="Cheng C.Y."/>
            <person name="Krishnakumar V."/>
            <person name="Chan A.P."/>
            <person name="Thibaud-Nissen F."/>
            <person name="Schobel S."/>
            <person name="Town C.D."/>
        </authorList>
    </citation>
    <scope>GENOME REANNOTATION</scope>
    <source>
        <strain>cv. Columbia</strain>
    </source>
</reference>
<reference key="4">
    <citation type="journal article" date="2003" name="Science">
        <title>Empirical analysis of transcriptional activity in the Arabidopsis genome.</title>
        <authorList>
            <person name="Yamada K."/>
            <person name="Lim J."/>
            <person name="Dale J.M."/>
            <person name="Chen H."/>
            <person name="Shinn P."/>
            <person name="Palm C.J."/>
            <person name="Southwick A.M."/>
            <person name="Wu H.C."/>
            <person name="Kim C.J."/>
            <person name="Nguyen M."/>
            <person name="Pham P.K."/>
            <person name="Cheuk R.F."/>
            <person name="Karlin-Newmann G."/>
            <person name="Liu S.X."/>
            <person name="Lam B."/>
            <person name="Sakano H."/>
            <person name="Wu T."/>
            <person name="Yu G."/>
            <person name="Miranda M."/>
            <person name="Quach H.L."/>
            <person name="Tripp M."/>
            <person name="Chang C.H."/>
            <person name="Lee J.M."/>
            <person name="Toriumi M.J."/>
            <person name="Chan M.M."/>
            <person name="Tang C.C."/>
            <person name="Onodera C.S."/>
            <person name="Deng J.M."/>
            <person name="Akiyama K."/>
            <person name="Ansari Y."/>
            <person name="Arakawa T."/>
            <person name="Banh J."/>
            <person name="Banno F."/>
            <person name="Bowser L."/>
            <person name="Brooks S.Y."/>
            <person name="Carninci P."/>
            <person name="Chao Q."/>
            <person name="Choy N."/>
            <person name="Enju A."/>
            <person name="Goldsmith A.D."/>
            <person name="Gurjal M."/>
            <person name="Hansen N.F."/>
            <person name="Hayashizaki Y."/>
            <person name="Johnson-Hopson C."/>
            <person name="Hsuan V.W."/>
            <person name="Iida K."/>
            <person name="Karnes M."/>
            <person name="Khan S."/>
            <person name="Koesema E."/>
            <person name="Ishida J."/>
            <person name="Jiang P.X."/>
            <person name="Jones T."/>
            <person name="Kawai J."/>
            <person name="Kamiya A."/>
            <person name="Meyers C."/>
            <person name="Nakajima M."/>
            <person name="Narusaka M."/>
            <person name="Seki M."/>
            <person name="Sakurai T."/>
            <person name="Satou M."/>
            <person name="Tamse R."/>
            <person name="Vaysberg M."/>
            <person name="Wallender E.K."/>
            <person name="Wong C."/>
            <person name="Yamamura Y."/>
            <person name="Yuan S."/>
            <person name="Shinozaki K."/>
            <person name="Davis R.W."/>
            <person name="Theologis A."/>
            <person name="Ecker J.R."/>
        </authorList>
    </citation>
    <scope>NUCLEOTIDE SEQUENCE [LARGE SCALE MRNA]</scope>
    <source>
        <strain>cv. Columbia</strain>
    </source>
</reference>
<reference key="5">
    <citation type="submission" date="2002-03" db="EMBL/GenBank/DDBJ databases">
        <title>Full-length cDNA from Arabidopsis thaliana.</title>
        <authorList>
            <person name="Brover V.V."/>
            <person name="Troukhan M.E."/>
            <person name="Alexandrov N.A."/>
            <person name="Lu Y.-P."/>
            <person name="Flavell R.B."/>
            <person name="Feldmann K.A."/>
        </authorList>
    </citation>
    <scope>NUCLEOTIDE SEQUENCE [LARGE SCALE MRNA]</scope>
</reference>
<reference key="6">
    <citation type="journal article" date="2010" name="Plant Cell">
        <title>A novel role for Arabidopsis mitochondrial ABC transporter ATM3 in molybdenum cofactor biosynthesis.</title>
        <authorList>
            <person name="Teschner J."/>
            <person name="Lachmann N."/>
            <person name="Schulze J."/>
            <person name="Geisler M."/>
            <person name="Selbach K."/>
            <person name="Santamaria-Araujo J."/>
            <person name="Balk J."/>
            <person name="Mendel R.R."/>
            <person name="Bittner F."/>
        </authorList>
    </citation>
    <scope>SUBCELLULAR LOCATION</scope>
    <scope>SUBUNIT</scope>
</reference>
<reference key="7">
    <citation type="journal article" date="2015" name="J. Exp. Bot.">
        <title>Identification of cleavage sites and substrate proteins for two mitochondrial intermediate peptidases in Arabidopsis thaliana.</title>
        <authorList>
            <person name="Carrie C."/>
            <person name="Venne A.S."/>
            <person name="Zahedi R.P."/>
            <person name="Soll J."/>
        </authorList>
    </citation>
    <scope>IDENTIFICATION BY MASS SPECTROMETRY</scope>
    <scope>CLEAVAGE OF TRANSIT PEPTIDE AFTER PHE-45</scope>
</reference>
<evidence type="ECO:0000250" key="1"/>
<evidence type="ECO:0000250" key="2">
    <source>
        <dbReference type="UniProtKB" id="P69848"/>
    </source>
</evidence>
<evidence type="ECO:0000255" key="3">
    <source>
        <dbReference type="PROSITE-ProRule" id="PRU01266"/>
    </source>
</evidence>
<evidence type="ECO:0000269" key="4">
    <source>
    </source>
</evidence>
<evidence type="ECO:0000269" key="5">
    <source>
    </source>
</evidence>
<evidence type="ECO:0000305" key="6"/>
<evidence type="ECO:0000305" key="7">
    <source>
    </source>
</evidence>
<accession>Q39055</accession>
<accession>F4IRV0</accession>
<accession>Q8LBF4</accession>
<sequence>MRRCFSKITDCHLGFKNSNFLLVGSEVGSGSVTRTITTTTSERLFSSSYAAHQVDQIKDNPVSDMLIDKFGRLHTYLRISLTERCNLRCQYCMPSEGVELTPKPQLLSQSEIVRLAGLFVSAGVNKIRLTGGEPTVRKDIEEICLQLSSLKGLKNLAITTNGITLAKKLPRLKECGLDSLNISLDTLVPAKFEFLTRRKGHDRVMKSIDTAIELGYNPVKVNCVIMRGLNDDEICDFVELTRDKPINVRFIEFMPFDGNVWNVKKLVPYAEVMDKVVKRFPSIKRMQDHPTETAKNFTIDGHCGSVSFITSMTEHFCAGCNRLRLLADGNFKVCLFGPSEVSLRDPLRSGADDEALREIIGAAVKRKKAAHAGMLDIAKTANRPMIHIGG</sequence>
<feature type="transit peptide" description="Mitochondrion" evidence="5">
    <location>
        <begin position="1"/>
        <end position="45"/>
    </location>
</feature>
<feature type="chain" id="PRO_0000153032" description="GTP 3',8-cyclase, mitochondrial">
    <location>
        <begin position="46"/>
        <end position="390"/>
    </location>
</feature>
<feature type="domain" description="Radical SAM core" evidence="3">
    <location>
        <begin position="69"/>
        <end position="290"/>
    </location>
</feature>
<feature type="binding site" evidence="1">
    <location>
        <position position="78"/>
    </location>
    <ligand>
        <name>GTP</name>
        <dbReference type="ChEBI" id="CHEBI:37565"/>
    </ligand>
</feature>
<feature type="binding site" evidence="1">
    <location>
        <position position="85"/>
    </location>
    <ligand>
        <name>[4Fe-4S] cluster</name>
        <dbReference type="ChEBI" id="CHEBI:49883"/>
        <label>1</label>
        <note>4Fe-4S-S-AdoMet</note>
    </ligand>
</feature>
<feature type="binding site" evidence="1">
    <location>
        <position position="89"/>
    </location>
    <ligand>
        <name>[4Fe-4S] cluster</name>
        <dbReference type="ChEBI" id="CHEBI:49883"/>
        <label>1</label>
        <note>4Fe-4S-S-AdoMet</note>
    </ligand>
</feature>
<feature type="binding site" evidence="1">
    <location>
        <position position="91"/>
    </location>
    <ligand>
        <name>S-adenosyl-L-methionine</name>
        <dbReference type="ChEBI" id="CHEBI:59789"/>
    </ligand>
</feature>
<feature type="binding site" evidence="1">
    <location>
        <position position="92"/>
    </location>
    <ligand>
        <name>[4Fe-4S] cluster</name>
        <dbReference type="ChEBI" id="CHEBI:49883"/>
        <label>1</label>
        <note>4Fe-4S-S-AdoMet</note>
    </ligand>
</feature>
<feature type="binding site" evidence="1">
    <location>
        <position position="128"/>
    </location>
    <ligand>
        <name>GTP</name>
        <dbReference type="ChEBI" id="CHEBI:37565"/>
    </ligand>
</feature>
<feature type="binding site" evidence="1">
    <location>
        <position position="132"/>
    </location>
    <ligand>
        <name>S-adenosyl-L-methionine</name>
        <dbReference type="ChEBI" id="CHEBI:59789"/>
    </ligand>
</feature>
<feature type="binding site" evidence="1">
    <location>
        <position position="159"/>
    </location>
    <ligand>
        <name>GTP</name>
        <dbReference type="ChEBI" id="CHEBI:37565"/>
    </ligand>
</feature>
<feature type="binding site" evidence="1">
    <location>
        <position position="183"/>
    </location>
    <ligand>
        <name>S-adenosyl-L-methionine</name>
        <dbReference type="ChEBI" id="CHEBI:59789"/>
    </ligand>
</feature>
<feature type="binding site" evidence="1">
    <location>
        <position position="220"/>
    </location>
    <ligand>
        <name>GTP</name>
        <dbReference type="ChEBI" id="CHEBI:37565"/>
    </ligand>
</feature>
<feature type="binding site" evidence="1">
    <location>
        <position position="254"/>
    </location>
    <ligand>
        <name>S-adenosyl-L-methionine</name>
        <dbReference type="ChEBI" id="CHEBI:59789"/>
    </ligand>
</feature>
<feature type="binding site" evidence="1">
    <location>
        <position position="317"/>
    </location>
    <ligand>
        <name>[4Fe-4S] cluster</name>
        <dbReference type="ChEBI" id="CHEBI:49883"/>
        <label>2</label>
        <note>4Fe-4S-substrate</note>
    </ligand>
</feature>
<feature type="binding site" evidence="1">
    <location>
        <position position="320"/>
    </location>
    <ligand>
        <name>[4Fe-4S] cluster</name>
        <dbReference type="ChEBI" id="CHEBI:49883"/>
        <label>2</label>
        <note>4Fe-4S-substrate</note>
    </ligand>
</feature>
<feature type="binding site" evidence="1">
    <location>
        <begin position="322"/>
        <end position="324"/>
    </location>
    <ligand>
        <name>GTP</name>
        <dbReference type="ChEBI" id="CHEBI:37565"/>
    </ligand>
</feature>
<feature type="binding site" evidence="1">
    <location>
        <position position="334"/>
    </location>
    <ligand>
        <name>[4Fe-4S] cluster</name>
        <dbReference type="ChEBI" id="CHEBI:49883"/>
        <label>2</label>
        <note>4Fe-4S-substrate</note>
    </ligand>
</feature>
<feature type="splice variant" id="VSP_044629" description="In isoform 2." evidence="6">
    <location>
        <begin position="333"/>
        <end position="340"/>
    </location>
</feature>
<feature type="sequence conflict" description="In Ref. 5; AAM64798." evidence="6" ref="5">
    <original>V</original>
    <variation>A</variation>
    <location>
        <position position="124"/>
    </location>
</feature>
<feature type="sequence conflict" description="In Ref. 5; AAM64798." evidence="6" ref="5">
    <original>I</original>
    <variation>M</variation>
    <location>
        <position position="163"/>
    </location>
</feature>
<keyword id="KW-0004">4Fe-4S</keyword>
<keyword id="KW-0025">Alternative splicing</keyword>
<keyword id="KW-0342">GTP-binding</keyword>
<keyword id="KW-0408">Iron</keyword>
<keyword id="KW-0411">Iron-sulfur</keyword>
<keyword id="KW-0456">Lyase</keyword>
<keyword id="KW-0479">Metal-binding</keyword>
<keyword id="KW-0496">Mitochondrion</keyword>
<keyword id="KW-0501">Molybdenum cofactor biosynthesis</keyword>
<keyword id="KW-0547">Nucleotide-binding</keyword>
<keyword id="KW-1185">Reference proteome</keyword>
<keyword id="KW-0949">S-adenosyl-L-methionine</keyword>
<keyword id="KW-0809">Transit peptide</keyword>
<gene>
    <name type="primary">CNX2</name>
    <name type="ordered locus">At2g31955</name>
    <name type="ORF">F20M17.1</name>
    <name type="ORF">F22D22.30</name>
</gene>
<dbReference type="EC" id="4.1.99.22" evidence="2"/>
<dbReference type="EMBL" id="Z48047">
    <property type="protein sequence ID" value="CAA88107.1"/>
    <property type="molecule type" value="mRNA"/>
</dbReference>
<dbReference type="EMBL" id="AC006223">
    <property type="protein sequence ID" value="AAM15155.1"/>
    <property type="molecule type" value="Genomic_DNA"/>
</dbReference>
<dbReference type="EMBL" id="AC006533">
    <property type="protein sequence ID" value="AAM15276.1"/>
    <property type="molecule type" value="Genomic_DNA"/>
</dbReference>
<dbReference type="EMBL" id="CP002685">
    <property type="protein sequence ID" value="AEC08608.1"/>
    <property type="molecule type" value="Genomic_DNA"/>
</dbReference>
<dbReference type="EMBL" id="CP002685">
    <property type="protein sequence ID" value="AEC08609.1"/>
    <property type="molecule type" value="Genomic_DNA"/>
</dbReference>
<dbReference type="EMBL" id="CP002685">
    <property type="protein sequence ID" value="AEC08610.1"/>
    <property type="molecule type" value="Genomic_DNA"/>
</dbReference>
<dbReference type="EMBL" id="CP002685">
    <property type="protein sequence ID" value="ANM62583.1"/>
    <property type="molecule type" value="Genomic_DNA"/>
</dbReference>
<dbReference type="EMBL" id="AY065265">
    <property type="protein sequence ID" value="AAL38741.1"/>
    <property type="molecule type" value="mRNA"/>
</dbReference>
<dbReference type="EMBL" id="AY096557">
    <property type="protein sequence ID" value="AAM20207.1"/>
    <property type="molecule type" value="mRNA"/>
</dbReference>
<dbReference type="EMBL" id="AY087242">
    <property type="protein sequence ID" value="AAM64798.1"/>
    <property type="molecule type" value="mRNA"/>
</dbReference>
<dbReference type="PIR" id="B84727">
    <property type="entry name" value="B84727"/>
</dbReference>
<dbReference type="RefSeq" id="NP_001031461.1">
    <molecule id="Q39055-1"/>
    <property type="nucleotide sequence ID" value="NM_001036384.2"/>
</dbReference>
<dbReference type="RefSeq" id="NP_001189652.1">
    <molecule id="Q39055-2"/>
    <property type="nucleotide sequence ID" value="NM_001202723.1"/>
</dbReference>
<dbReference type="RefSeq" id="NP_001324731.1">
    <molecule id="Q39055-1"/>
    <property type="nucleotide sequence ID" value="NM_001336358.1"/>
</dbReference>
<dbReference type="RefSeq" id="NP_850177.2">
    <molecule id="Q39055-1"/>
    <property type="nucleotide sequence ID" value="NM_179846.4"/>
</dbReference>
<dbReference type="SMR" id="Q39055"/>
<dbReference type="BioGRID" id="3101">
    <property type="interactions" value="3"/>
</dbReference>
<dbReference type="FunCoup" id="Q39055">
    <property type="interactions" value="1793"/>
</dbReference>
<dbReference type="IntAct" id="Q39055">
    <property type="interactions" value="3"/>
</dbReference>
<dbReference type="STRING" id="3702.Q39055"/>
<dbReference type="SwissPalm" id="Q39055"/>
<dbReference type="PaxDb" id="3702-AT2G31955.2"/>
<dbReference type="ProteomicsDB" id="220397">
    <molecule id="Q39055-1"/>
</dbReference>
<dbReference type="EnsemblPlants" id="AT2G31955.1">
    <molecule id="Q39055-1"/>
    <property type="protein sequence ID" value="AT2G31955.1"/>
    <property type="gene ID" value="AT2G31955"/>
</dbReference>
<dbReference type="EnsemblPlants" id="AT2G31955.2">
    <molecule id="Q39055-1"/>
    <property type="protein sequence ID" value="AT2G31955.2"/>
    <property type="gene ID" value="AT2G31955"/>
</dbReference>
<dbReference type="EnsemblPlants" id="AT2G31955.3">
    <molecule id="Q39055-2"/>
    <property type="protein sequence ID" value="AT2G31955.3"/>
    <property type="gene ID" value="AT2G31955"/>
</dbReference>
<dbReference type="EnsemblPlants" id="AT2G31955.5">
    <molecule id="Q39055-1"/>
    <property type="protein sequence ID" value="AT2G31955.5"/>
    <property type="gene ID" value="AT2G31955"/>
</dbReference>
<dbReference type="GeneID" id="817754"/>
<dbReference type="Gramene" id="AT2G31955.1">
    <molecule id="Q39055-1"/>
    <property type="protein sequence ID" value="AT2G31955.1"/>
    <property type="gene ID" value="AT2G31955"/>
</dbReference>
<dbReference type="Gramene" id="AT2G31955.2">
    <molecule id="Q39055-1"/>
    <property type="protein sequence ID" value="AT2G31955.2"/>
    <property type="gene ID" value="AT2G31955"/>
</dbReference>
<dbReference type="Gramene" id="AT2G31955.3">
    <molecule id="Q39055-2"/>
    <property type="protein sequence ID" value="AT2G31955.3"/>
    <property type="gene ID" value="AT2G31955"/>
</dbReference>
<dbReference type="Gramene" id="AT2G31955.5">
    <molecule id="Q39055-1"/>
    <property type="protein sequence ID" value="AT2G31955.5"/>
    <property type="gene ID" value="AT2G31955"/>
</dbReference>
<dbReference type="KEGG" id="ath:AT2G31955"/>
<dbReference type="Araport" id="AT2G31955"/>
<dbReference type="TAIR" id="AT2G31955">
    <property type="gene designation" value="CNX2"/>
</dbReference>
<dbReference type="eggNOG" id="KOG2876">
    <property type="taxonomic scope" value="Eukaryota"/>
</dbReference>
<dbReference type="HOGENOM" id="CLU_009273_0_0_1"/>
<dbReference type="InParanoid" id="Q39055"/>
<dbReference type="OMA" id="QMSECFC"/>
<dbReference type="OrthoDB" id="429626at2759"/>
<dbReference type="PhylomeDB" id="Q39055"/>
<dbReference type="BioCyc" id="ARA:AT2G31955-MONOMER"/>
<dbReference type="BioCyc" id="MetaCyc:AT2G31955-MONOMER"/>
<dbReference type="BRENDA" id="4.1.99.22">
    <property type="organism ID" value="399"/>
</dbReference>
<dbReference type="UniPathway" id="UPA00344"/>
<dbReference type="PRO" id="PR:Q39055"/>
<dbReference type="Proteomes" id="UP000006548">
    <property type="component" value="Chromosome 2"/>
</dbReference>
<dbReference type="ExpressionAtlas" id="Q39055">
    <property type="expression patterns" value="baseline and differential"/>
</dbReference>
<dbReference type="GO" id="GO:0009507">
    <property type="term" value="C:chloroplast"/>
    <property type="evidence" value="ECO:0000250"/>
    <property type="project" value="TAIR"/>
</dbReference>
<dbReference type="GO" id="GO:0005759">
    <property type="term" value="C:mitochondrial matrix"/>
    <property type="evidence" value="ECO:0007669"/>
    <property type="project" value="UniProtKB-SubCell"/>
</dbReference>
<dbReference type="GO" id="GO:0005739">
    <property type="term" value="C:mitochondrion"/>
    <property type="evidence" value="ECO:0000314"/>
    <property type="project" value="CACAO"/>
</dbReference>
<dbReference type="GO" id="GO:0051539">
    <property type="term" value="F:4 iron, 4 sulfur cluster binding"/>
    <property type="evidence" value="ECO:0007669"/>
    <property type="project" value="UniProtKB-KW"/>
</dbReference>
<dbReference type="GO" id="GO:0061798">
    <property type="term" value="F:GTP 3',8'-cyclase activity"/>
    <property type="evidence" value="ECO:0007669"/>
    <property type="project" value="UniProtKB-EC"/>
</dbReference>
<dbReference type="GO" id="GO:0005525">
    <property type="term" value="F:GTP binding"/>
    <property type="evidence" value="ECO:0007669"/>
    <property type="project" value="UniProtKB-KW"/>
</dbReference>
<dbReference type="GO" id="GO:0046872">
    <property type="term" value="F:metal ion binding"/>
    <property type="evidence" value="ECO:0007669"/>
    <property type="project" value="UniProtKB-KW"/>
</dbReference>
<dbReference type="GO" id="GO:0006777">
    <property type="term" value="P:Mo-molybdopterin cofactor biosynthetic process"/>
    <property type="evidence" value="ECO:0000315"/>
    <property type="project" value="TAIR"/>
</dbReference>
<dbReference type="CDD" id="cd01335">
    <property type="entry name" value="Radical_SAM"/>
    <property type="match status" value="1"/>
</dbReference>
<dbReference type="CDD" id="cd21117">
    <property type="entry name" value="Twitch_MoaA"/>
    <property type="match status" value="1"/>
</dbReference>
<dbReference type="FunFam" id="3.20.20.70:FF:000334">
    <property type="entry name" value="CNX2"/>
    <property type="match status" value="1"/>
</dbReference>
<dbReference type="Gene3D" id="3.20.20.70">
    <property type="entry name" value="Aldolase class I"/>
    <property type="match status" value="1"/>
</dbReference>
<dbReference type="HAMAP" id="MF_01225_B">
    <property type="entry name" value="MoaA_B"/>
    <property type="match status" value="1"/>
</dbReference>
<dbReference type="InterPro" id="IPR013785">
    <property type="entry name" value="Aldolase_TIM"/>
</dbReference>
<dbReference type="InterPro" id="IPR006638">
    <property type="entry name" value="Elp3/MiaA/NifB-like_rSAM"/>
</dbReference>
<dbReference type="InterPro" id="IPR013483">
    <property type="entry name" value="MoaA"/>
</dbReference>
<dbReference type="InterPro" id="IPR000385">
    <property type="entry name" value="MoaA_NifB_PqqE_Fe-S-bd_CS"/>
</dbReference>
<dbReference type="InterPro" id="IPR010505">
    <property type="entry name" value="MoaA_twitch"/>
</dbReference>
<dbReference type="InterPro" id="IPR050105">
    <property type="entry name" value="MoCo_biosynth_MoaA/MoaC"/>
</dbReference>
<dbReference type="InterPro" id="IPR007197">
    <property type="entry name" value="rSAM"/>
</dbReference>
<dbReference type="NCBIfam" id="TIGR02666">
    <property type="entry name" value="moaA"/>
    <property type="match status" value="1"/>
</dbReference>
<dbReference type="NCBIfam" id="NF001199">
    <property type="entry name" value="PRK00164.2-1"/>
    <property type="match status" value="1"/>
</dbReference>
<dbReference type="PANTHER" id="PTHR22960:SF0">
    <property type="entry name" value="MOLYBDENUM COFACTOR BIOSYNTHESIS PROTEIN 1"/>
    <property type="match status" value="1"/>
</dbReference>
<dbReference type="PANTHER" id="PTHR22960">
    <property type="entry name" value="MOLYBDOPTERIN COFACTOR SYNTHESIS PROTEIN A"/>
    <property type="match status" value="1"/>
</dbReference>
<dbReference type="Pfam" id="PF06463">
    <property type="entry name" value="Mob_synth_C"/>
    <property type="match status" value="1"/>
</dbReference>
<dbReference type="Pfam" id="PF04055">
    <property type="entry name" value="Radical_SAM"/>
    <property type="match status" value="1"/>
</dbReference>
<dbReference type="SFLD" id="SFLDG01383">
    <property type="entry name" value="cyclic_pyranopterin_phosphate"/>
    <property type="match status" value="1"/>
</dbReference>
<dbReference type="SFLD" id="SFLDS00029">
    <property type="entry name" value="Radical_SAM"/>
    <property type="match status" value="1"/>
</dbReference>
<dbReference type="SMART" id="SM00729">
    <property type="entry name" value="Elp3"/>
    <property type="match status" value="1"/>
</dbReference>
<dbReference type="SUPFAM" id="SSF102114">
    <property type="entry name" value="Radical SAM enzymes"/>
    <property type="match status" value="1"/>
</dbReference>
<dbReference type="PROSITE" id="PS01305">
    <property type="entry name" value="MOAA_NIFB_PQQE"/>
    <property type="match status" value="1"/>
</dbReference>
<dbReference type="PROSITE" id="PS51918">
    <property type="entry name" value="RADICAL_SAM"/>
    <property type="match status" value="1"/>
</dbReference>
<name>CNX2_ARATH</name>
<organism>
    <name type="scientific">Arabidopsis thaliana</name>
    <name type="common">Mouse-ear cress</name>
    <dbReference type="NCBI Taxonomy" id="3702"/>
    <lineage>
        <taxon>Eukaryota</taxon>
        <taxon>Viridiplantae</taxon>
        <taxon>Streptophyta</taxon>
        <taxon>Embryophyta</taxon>
        <taxon>Tracheophyta</taxon>
        <taxon>Spermatophyta</taxon>
        <taxon>Magnoliopsida</taxon>
        <taxon>eudicotyledons</taxon>
        <taxon>Gunneridae</taxon>
        <taxon>Pentapetalae</taxon>
        <taxon>rosids</taxon>
        <taxon>malvids</taxon>
        <taxon>Brassicales</taxon>
        <taxon>Brassicaceae</taxon>
        <taxon>Camelineae</taxon>
        <taxon>Arabidopsis</taxon>
    </lineage>
</organism>